<dbReference type="EC" id="5.6.2.3" evidence="1 3 5 6"/>
<dbReference type="EMBL" id="DQ437529">
    <property type="protein sequence ID" value="ABD92708.1"/>
    <property type="molecule type" value="mRNA"/>
</dbReference>
<dbReference type="EMBL" id="EU084033">
    <property type="protein sequence ID" value="ABW71293.1"/>
    <property type="molecule type" value="mRNA"/>
</dbReference>
<dbReference type="EMBL" id="AY498716">
    <property type="protein sequence ID" value="AAS77398.1"/>
    <property type="molecule type" value="mRNA"/>
</dbReference>
<dbReference type="EMBL" id="AB185926">
    <property type="protein sequence ID" value="BAE47454.1"/>
    <property type="molecule type" value="mRNA"/>
</dbReference>
<dbReference type="EMBL" id="AB185927">
    <property type="protein sequence ID" value="BAE47455.1"/>
    <property type="molecule type" value="mRNA"/>
</dbReference>
<dbReference type="EMBL" id="AK026345">
    <property type="protein sequence ID" value="BAB15456.1"/>
    <property type="molecule type" value="mRNA"/>
</dbReference>
<dbReference type="EMBL" id="BC137503">
    <property type="protein sequence ID" value="AAI37504.1"/>
    <property type="molecule type" value="mRNA"/>
</dbReference>
<dbReference type="EMBL" id="BC137504">
    <property type="protein sequence ID" value="AAI37505.1"/>
    <property type="molecule type" value="mRNA"/>
</dbReference>
<dbReference type="CCDS" id="CCDS10195.2">
    <molecule id="Q9H611-1"/>
</dbReference>
<dbReference type="CCDS" id="CCDS66797.1">
    <molecule id="Q9H611-3"/>
</dbReference>
<dbReference type="RefSeq" id="NP_001273425.1">
    <molecule id="Q9H611-1"/>
    <property type="nucleotide sequence ID" value="NM_001286496.2"/>
</dbReference>
<dbReference type="RefSeq" id="NP_001273426.1">
    <molecule id="Q9H611-3"/>
    <property type="nucleotide sequence ID" value="NM_001286497.2"/>
</dbReference>
<dbReference type="RefSeq" id="NP_001273428.1">
    <molecule id="Q9H611-4"/>
    <property type="nucleotide sequence ID" value="NM_001286499.2"/>
</dbReference>
<dbReference type="RefSeq" id="NP_079325.2">
    <molecule id="Q9H611-1"/>
    <property type="nucleotide sequence ID" value="NM_025049.4"/>
</dbReference>
<dbReference type="RefSeq" id="XP_011520385.1">
    <molecule id="Q9H611-1"/>
    <property type="nucleotide sequence ID" value="XM_011522083.3"/>
</dbReference>
<dbReference type="RefSeq" id="XP_011520386.1">
    <molecule id="Q9H611-1"/>
    <property type="nucleotide sequence ID" value="XM_011522084.3"/>
</dbReference>
<dbReference type="PDB" id="5FHH">
    <property type="method" value="X-ray"/>
    <property type="resolution" value="3.60 A"/>
    <property type="chains" value="A/B=200-641"/>
</dbReference>
<dbReference type="PDB" id="6HPH">
    <property type="method" value="X-ray"/>
    <property type="resolution" value="1.13 A"/>
    <property type="chains" value="A=206-620"/>
</dbReference>
<dbReference type="PDB" id="6HPQ">
    <property type="method" value="X-ray"/>
    <property type="resolution" value="1.43 A"/>
    <property type="chains" value="A/B=206-620"/>
</dbReference>
<dbReference type="PDB" id="6HPT">
    <property type="method" value="X-ray"/>
    <property type="resolution" value="1.44 A"/>
    <property type="chains" value="A=206-641"/>
</dbReference>
<dbReference type="PDB" id="6HPU">
    <property type="method" value="X-ray"/>
    <property type="resolution" value="3.96 A"/>
    <property type="chains" value="A/B=206-620"/>
</dbReference>
<dbReference type="PDB" id="9FB8">
    <property type="method" value="X-ray"/>
    <property type="resolution" value="1.73 A"/>
    <property type="chains" value="A=206-621"/>
</dbReference>
<dbReference type="PDB" id="9FI9">
    <property type="method" value="X-ray"/>
    <property type="resolution" value="1.73 A"/>
    <property type="chains" value="A=206-620"/>
</dbReference>
<dbReference type="PDBsum" id="5FHH"/>
<dbReference type="PDBsum" id="6HPH"/>
<dbReference type="PDBsum" id="6HPQ"/>
<dbReference type="PDBsum" id="6HPT"/>
<dbReference type="PDBsum" id="6HPU"/>
<dbReference type="PDBsum" id="9FB8"/>
<dbReference type="PDBsum" id="9FI9"/>
<dbReference type="SMR" id="Q9H611"/>
<dbReference type="BioGRID" id="123122">
    <property type="interactions" value="21"/>
</dbReference>
<dbReference type="FunCoup" id="Q9H611">
    <property type="interactions" value="837"/>
</dbReference>
<dbReference type="IntAct" id="Q9H611">
    <property type="interactions" value="13"/>
</dbReference>
<dbReference type="STRING" id="9606.ENSP00000328174"/>
<dbReference type="GlyGen" id="Q9H611">
    <property type="glycosylation" value="1 site"/>
</dbReference>
<dbReference type="iPTMnet" id="Q9H611"/>
<dbReference type="PhosphoSitePlus" id="Q9H611"/>
<dbReference type="BioMuta" id="PIF1"/>
<dbReference type="DMDM" id="152031656"/>
<dbReference type="jPOST" id="Q9H611"/>
<dbReference type="MassIVE" id="Q9H611"/>
<dbReference type="PaxDb" id="9606-ENSP00000328174"/>
<dbReference type="PeptideAtlas" id="Q9H611"/>
<dbReference type="ProteomicsDB" id="80948">
    <molecule id="Q9H611-1"/>
</dbReference>
<dbReference type="ProteomicsDB" id="80949">
    <molecule id="Q9H611-2"/>
</dbReference>
<dbReference type="ProteomicsDB" id="80950">
    <molecule id="Q9H611-3"/>
</dbReference>
<dbReference type="Antibodypedia" id="4360">
    <property type="antibodies" value="118 antibodies from 23 providers"/>
</dbReference>
<dbReference type="DNASU" id="80119"/>
<dbReference type="Ensembl" id="ENST00000268043.8">
    <molecule id="Q9H611-1"/>
    <property type="protein sequence ID" value="ENSP00000268043.4"/>
    <property type="gene ID" value="ENSG00000140451.13"/>
</dbReference>
<dbReference type="Ensembl" id="ENST00000333425.10">
    <molecule id="Q9H611-3"/>
    <property type="protein sequence ID" value="ENSP00000328174.6"/>
    <property type="gene ID" value="ENSG00000140451.13"/>
</dbReference>
<dbReference type="Ensembl" id="ENST00000559239.2">
    <molecule id="Q9H611-1"/>
    <property type="protein sequence ID" value="ENSP00000452792.1"/>
    <property type="gene ID" value="ENSG00000140451.13"/>
</dbReference>
<dbReference type="GeneID" id="80119"/>
<dbReference type="KEGG" id="hsa:80119"/>
<dbReference type="MANE-Select" id="ENST00000559239.2">
    <property type="protein sequence ID" value="ENSP00000452792.1"/>
    <property type="RefSeq nucleotide sequence ID" value="NM_001286496.2"/>
    <property type="RefSeq protein sequence ID" value="NP_001273425.1"/>
</dbReference>
<dbReference type="UCSC" id="uc002ant.4">
    <molecule id="Q9H611-1"/>
    <property type="organism name" value="human"/>
</dbReference>
<dbReference type="AGR" id="HGNC:26220"/>
<dbReference type="CTD" id="80119"/>
<dbReference type="DisGeNET" id="80119"/>
<dbReference type="GeneCards" id="PIF1"/>
<dbReference type="HGNC" id="HGNC:26220">
    <property type="gene designation" value="PIF1"/>
</dbReference>
<dbReference type="HPA" id="ENSG00000140451">
    <property type="expression patterns" value="Tissue enhanced (lymphoid)"/>
</dbReference>
<dbReference type="MIM" id="610953">
    <property type="type" value="gene"/>
</dbReference>
<dbReference type="neXtProt" id="NX_Q9H611"/>
<dbReference type="OpenTargets" id="ENSG00000140451"/>
<dbReference type="PharmGKB" id="PA162399475"/>
<dbReference type="VEuPathDB" id="HostDB:ENSG00000140451"/>
<dbReference type="eggNOG" id="KOG0987">
    <property type="taxonomic scope" value="Eukaryota"/>
</dbReference>
<dbReference type="GeneTree" id="ENSGT00530000063561"/>
<dbReference type="HOGENOM" id="CLU_001613_7_1_1"/>
<dbReference type="InParanoid" id="Q9H611"/>
<dbReference type="OMA" id="SSAWESC"/>
<dbReference type="OrthoDB" id="272985at2759"/>
<dbReference type="PAN-GO" id="Q9H611">
    <property type="GO annotations" value="3 GO annotations based on evolutionary models"/>
</dbReference>
<dbReference type="PhylomeDB" id="Q9H611"/>
<dbReference type="TreeFam" id="TF319207"/>
<dbReference type="BRENDA" id="3.6.4.12">
    <property type="organism ID" value="2681"/>
</dbReference>
<dbReference type="PathwayCommons" id="Q9H611"/>
<dbReference type="Reactome" id="R-HSA-171319">
    <property type="pathway name" value="Telomere Extension By Telomerase"/>
</dbReference>
<dbReference type="SABIO-RK" id="Q9H611"/>
<dbReference type="SignaLink" id="Q9H611"/>
<dbReference type="BioGRID-ORCS" id="80119">
    <property type="hits" value="12 hits in 1156 CRISPR screens"/>
</dbReference>
<dbReference type="ChiTaRS" id="PIF1">
    <property type="organism name" value="human"/>
</dbReference>
<dbReference type="GenomeRNAi" id="80119"/>
<dbReference type="Pharos" id="Q9H611">
    <property type="development level" value="Tbio"/>
</dbReference>
<dbReference type="PRO" id="PR:Q9H611"/>
<dbReference type="Proteomes" id="UP000005640">
    <property type="component" value="Chromosome 15"/>
</dbReference>
<dbReference type="RNAct" id="Q9H611">
    <property type="molecule type" value="protein"/>
</dbReference>
<dbReference type="Bgee" id="ENSG00000140451">
    <property type="expression patterns" value="Expressed in ventricular zone and 100 other cell types or tissues"/>
</dbReference>
<dbReference type="GO" id="GO:0000781">
    <property type="term" value="C:chromosome, telomeric region"/>
    <property type="evidence" value="ECO:0000314"/>
    <property type="project" value="HGNC-UCL"/>
</dbReference>
<dbReference type="GO" id="GO:0042645">
    <property type="term" value="C:mitochondrial nucleoid"/>
    <property type="evidence" value="ECO:0000314"/>
    <property type="project" value="FlyBase"/>
</dbReference>
<dbReference type="GO" id="GO:0005739">
    <property type="term" value="C:mitochondrion"/>
    <property type="evidence" value="ECO:0007669"/>
    <property type="project" value="UniProtKB-SubCell"/>
</dbReference>
<dbReference type="GO" id="GO:0005654">
    <property type="term" value="C:nucleoplasm"/>
    <property type="evidence" value="ECO:0000304"/>
    <property type="project" value="Reactome"/>
</dbReference>
<dbReference type="GO" id="GO:0005634">
    <property type="term" value="C:nucleus"/>
    <property type="evidence" value="ECO:0000314"/>
    <property type="project" value="FlyBase"/>
</dbReference>
<dbReference type="GO" id="GO:0043139">
    <property type="term" value="F:5'-3' DNA helicase activity"/>
    <property type="evidence" value="ECO:0000314"/>
    <property type="project" value="HGNC-UCL"/>
</dbReference>
<dbReference type="GO" id="GO:0033678">
    <property type="term" value="F:5'-3' DNA/RNA helicase activity"/>
    <property type="evidence" value="ECO:0000314"/>
    <property type="project" value="HGNC-UCL"/>
</dbReference>
<dbReference type="GO" id="GO:0005524">
    <property type="term" value="F:ATP binding"/>
    <property type="evidence" value="ECO:0000314"/>
    <property type="project" value="HGNC-UCL"/>
</dbReference>
<dbReference type="GO" id="GO:0016887">
    <property type="term" value="F:ATP hydrolysis activity"/>
    <property type="evidence" value="ECO:0007669"/>
    <property type="project" value="RHEA"/>
</dbReference>
<dbReference type="GO" id="GO:0051880">
    <property type="term" value="F:G-quadruplex DNA binding"/>
    <property type="evidence" value="ECO:0007669"/>
    <property type="project" value="UniProtKB-UniRule"/>
</dbReference>
<dbReference type="GO" id="GO:0000287">
    <property type="term" value="F:magnesium ion binding"/>
    <property type="evidence" value="ECO:0000314"/>
    <property type="project" value="HGNC-UCL"/>
</dbReference>
<dbReference type="GO" id="GO:0017116">
    <property type="term" value="F:single-stranded DNA helicase activity"/>
    <property type="evidence" value="ECO:0000314"/>
    <property type="project" value="HGNC-UCL"/>
</dbReference>
<dbReference type="GO" id="GO:0010521">
    <property type="term" value="F:telomerase inhibitor activity"/>
    <property type="evidence" value="ECO:0007669"/>
    <property type="project" value="UniProtKB-UniRule"/>
</dbReference>
<dbReference type="GO" id="GO:0042162">
    <property type="term" value="F:telomeric DNA binding"/>
    <property type="evidence" value="ECO:0000314"/>
    <property type="project" value="HGNC-UCL"/>
</dbReference>
<dbReference type="GO" id="GO:0006310">
    <property type="term" value="P:DNA recombination"/>
    <property type="evidence" value="ECO:0007669"/>
    <property type="project" value="UniProtKB-UniRule"/>
</dbReference>
<dbReference type="GO" id="GO:0006281">
    <property type="term" value="P:DNA repair"/>
    <property type="evidence" value="ECO:0007669"/>
    <property type="project" value="UniProtKB-UniRule"/>
</dbReference>
<dbReference type="GO" id="GO:0000002">
    <property type="term" value="P:mitochondrial genome maintenance"/>
    <property type="evidence" value="ECO:0007669"/>
    <property type="project" value="UniProtKB-UniRule"/>
</dbReference>
<dbReference type="GO" id="GO:0032211">
    <property type="term" value="P:negative regulation of telomere maintenance via telomerase"/>
    <property type="evidence" value="ECO:0000314"/>
    <property type="project" value="HGNC-UCL"/>
</dbReference>
<dbReference type="GO" id="GO:0001117">
    <property type="term" value="P:protein-DNA-RNA complex disassembly"/>
    <property type="evidence" value="ECO:0000314"/>
    <property type="project" value="HGNC-UCL"/>
</dbReference>
<dbReference type="GO" id="GO:0007004">
    <property type="term" value="P:telomere maintenance via telomerase"/>
    <property type="evidence" value="ECO:0000304"/>
    <property type="project" value="Reactome"/>
</dbReference>
<dbReference type="CDD" id="cd18037">
    <property type="entry name" value="DEXSc_Pif1_like"/>
    <property type="match status" value="1"/>
</dbReference>
<dbReference type="CDD" id="cd18809">
    <property type="entry name" value="SF1_C_RecD"/>
    <property type="match status" value="1"/>
</dbReference>
<dbReference type="FunFam" id="3.40.50.300:FF:000805">
    <property type="entry name" value="ATP-dependent DNA helicase PIF1"/>
    <property type="match status" value="1"/>
</dbReference>
<dbReference type="FunFam" id="3.40.50.300:FF:003367">
    <property type="entry name" value="ATP-dependent DNA helicase PIF1"/>
    <property type="match status" value="1"/>
</dbReference>
<dbReference type="Gene3D" id="3.40.50.300">
    <property type="entry name" value="P-loop containing nucleotide triphosphate hydrolases"/>
    <property type="match status" value="2"/>
</dbReference>
<dbReference type="HAMAP" id="MF_03176">
    <property type="entry name" value="PIF1"/>
    <property type="match status" value="1"/>
</dbReference>
<dbReference type="InterPro" id="IPR010285">
    <property type="entry name" value="DNA_helicase_pif1-like_DEAD"/>
</dbReference>
<dbReference type="InterPro" id="IPR027417">
    <property type="entry name" value="P-loop_NTPase"/>
</dbReference>
<dbReference type="InterPro" id="IPR049163">
    <property type="entry name" value="Pif1-like_2B_dom"/>
</dbReference>
<dbReference type="InterPro" id="IPR051055">
    <property type="entry name" value="PIF1_helicase"/>
</dbReference>
<dbReference type="InterPro" id="IPR048293">
    <property type="entry name" value="PIF1_RRM3_pfh1"/>
</dbReference>
<dbReference type="PANTHER" id="PTHR47642">
    <property type="entry name" value="ATP-DEPENDENT DNA HELICASE"/>
    <property type="match status" value="1"/>
</dbReference>
<dbReference type="PANTHER" id="PTHR47642:SF7">
    <property type="entry name" value="ATP-DEPENDENT DNA HELICASE PIF1"/>
    <property type="match status" value="1"/>
</dbReference>
<dbReference type="Pfam" id="PF25344">
    <property type="entry name" value="PH_LRR1"/>
    <property type="match status" value="1"/>
</dbReference>
<dbReference type="Pfam" id="PF05970">
    <property type="entry name" value="PIF1"/>
    <property type="match status" value="1"/>
</dbReference>
<dbReference type="Pfam" id="PF21530">
    <property type="entry name" value="Pif1_2B_dom"/>
    <property type="match status" value="1"/>
</dbReference>
<dbReference type="SUPFAM" id="SSF52540">
    <property type="entry name" value="P-loop containing nucleoside triphosphate hydrolases"/>
    <property type="match status" value="2"/>
</dbReference>
<protein>
    <recommendedName>
        <fullName evidence="1">ATP-dependent DNA helicase PIF1</fullName>
        <ecNumber evidence="1 3 5 6">5.6.2.3</ecNumber>
    </recommendedName>
    <alternativeName>
        <fullName evidence="1">DNA 5'-3' helicase PIF1</fullName>
    </alternativeName>
    <alternativeName>
        <fullName evidence="1">DNA repair and recombination helicase PIF1</fullName>
    </alternativeName>
    <alternativeName>
        <fullName>PIF1/RRM3 DNA helicase-like protein</fullName>
    </alternativeName>
</protein>
<comment type="function">
    <text evidence="1 3 4 5 6 7 8 10">DNA-dependent ATPase and 5'-3' DNA helicase required for the maintenance of both mitochondrial and nuclear genome stability. Efficiently unwinds G-quadruplex (G4) DNA structures and forked RNA-DNA hybrids. Resolves G4 structures, preventing replication pausing and double-strand breaks (DSBs) at G4 motifs. Involved in the maintenance of telomeric DNA. Inhibits telomere elongation, de novo telomere formation and telomere addition to DSBs via catalytic inhibition of telomerase. Reduces the processivity of telomerase by displacing active telomerase from DNA ends. Releases telomerase by unwinding the short telomerase RNA/telomeric DNA hybrid that is the intermediate in the telomerase reaction. Possesses an intrinsic strand annealing activity.</text>
</comment>
<comment type="catalytic activity">
    <reaction evidence="1 3 5 6 7 8">
        <text>Couples ATP hydrolysis with the unwinding of duplex DNA at the replication fork by translocating in the 5'-3' direction. This creates two antiparallel DNA single strands (ssDNA). The leading ssDNA polymer is the template for DNA polymerase III holoenzyme which synthesizes a continuous strand.</text>
        <dbReference type="EC" id="5.6.2.3"/>
    </reaction>
</comment>
<comment type="catalytic activity">
    <reaction evidence="1 3 5 6 7 8">
        <text>ATP + H2O = ADP + phosphate + H(+)</text>
        <dbReference type="Rhea" id="RHEA:13065"/>
        <dbReference type="ChEBI" id="CHEBI:15377"/>
        <dbReference type="ChEBI" id="CHEBI:15378"/>
        <dbReference type="ChEBI" id="CHEBI:30616"/>
        <dbReference type="ChEBI" id="CHEBI:43474"/>
        <dbReference type="ChEBI" id="CHEBI:456216"/>
        <dbReference type="EC" id="5.6.2.3"/>
    </reaction>
</comment>
<comment type="cofactor">
    <cofactor evidence="1 3">
        <name>Mg(2+)</name>
        <dbReference type="ChEBI" id="CHEBI:18420"/>
    </cofactor>
</comment>
<comment type="biophysicochemical properties">
    <kinetics>
        <KM evidence="6">0.17 mM for ATP</KM>
    </kinetics>
</comment>
<comment type="subunit">
    <text evidence="1 4 6">Monomer (PubMed:18835853). Interacts with telomerase (PubMed:17172855).</text>
</comment>
<comment type="subcellular location">
    <subcellularLocation>
        <location evidence="1 3 4 5">Nucleus</location>
    </subcellularLocation>
</comment>
<comment type="subcellular location">
    <molecule>Isoform 4</molecule>
    <subcellularLocation>
        <location evidence="1 9">Mitochondrion</location>
    </subcellularLocation>
</comment>
<comment type="alternative products">
    <event type="alternative splicing"/>
    <event type="alternative initiation"/>
    <isoform>
        <id>Q9H611-1</id>
        <name>1</name>
        <name>Isoform alpha</name>
        <sequence type="displayed"/>
    </isoform>
    <isoform>
        <id>Q9H611-2</id>
        <name>2</name>
        <sequence type="described" ref="VSP_026715 VSP_026716"/>
    </isoform>
    <isoform>
        <id>Q9H611-3</id>
        <name>3</name>
        <name>Isoform beta</name>
        <sequence type="described" ref="VSP_026717"/>
    </isoform>
    <isoform>
        <id>Q9H611-4</id>
        <name>4</name>
        <sequence type="described" ref="VSP_047457"/>
    </isoform>
</comment>
<comment type="tissue specificity">
    <text>Weak ubiquitous expression.</text>
</comment>
<comment type="induction">
    <text evidence="4">Tightly cell cycle regulated and expressed in late S/G2 phase.</text>
</comment>
<comment type="domain">
    <text>The PIF1 N-terminal (PINT) domain enhances the interaction with ssDNA through intrinsic binding activity, it also harbors DNA strand-annealing activity.</text>
</comment>
<comment type="miscellaneous">
    <molecule>Isoform 4</molecule>
    <text evidence="13">Produced by alternative initiation of isoform 1.</text>
</comment>
<comment type="similarity">
    <text evidence="1">Belongs to the helicase family. PIF1 subfamily.</text>
</comment>
<proteinExistence type="evidence at protein level"/>
<organism>
    <name type="scientific">Homo sapiens</name>
    <name type="common">Human</name>
    <dbReference type="NCBI Taxonomy" id="9606"/>
    <lineage>
        <taxon>Eukaryota</taxon>
        <taxon>Metazoa</taxon>
        <taxon>Chordata</taxon>
        <taxon>Craniata</taxon>
        <taxon>Vertebrata</taxon>
        <taxon>Euteleostomi</taxon>
        <taxon>Mammalia</taxon>
        <taxon>Eutheria</taxon>
        <taxon>Euarchontoglires</taxon>
        <taxon>Primates</taxon>
        <taxon>Haplorrhini</taxon>
        <taxon>Catarrhini</taxon>
        <taxon>Hominidae</taxon>
        <taxon>Homo</taxon>
    </lineage>
</organism>
<feature type="chain" id="PRO_0000089980" description="ATP-dependent DNA helicase PIF1">
    <location>
        <begin position="1"/>
        <end position="641"/>
    </location>
</feature>
<feature type="DNA-binding region" evidence="1">
    <location>
        <begin position="577"/>
        <end position="596"/>
    </location>
</feature>
<feature type="region of interest" description="PINT">
    <location>
        <begin position="1"/>
        <end position="180"/>
    </location>
</feature>
<feature type="region of interest" description="Hydrolyzes ATP in the presence of both magnesium and single-stranded DNA; weak activity in the presence of RNA or double-stranded DNA; No unwinding activity">
    <location>
        <begin position="167"/>
        <end position="641"/>
    </location>
</feature>
<feature type="region of interest" description="Disordered" evidence="2">
    <location>
        <begin position="173"/>
        <end position="192"/>
    </location>
</feature>
<feature type="region of interest" description="Disordered" evidence="2">
    <location>
        <begin position="622"/>
        <end position="641"/>
    </location>
</feature>
<feature type="compositionally biased region" description="Acidic residues" evidence="2">
    <location>
        <begin position="624"/>
        <end position="641"/>
    </location>
</feature>
<feature type="binding site" evidence="1">
    <location>
        <begin position="228"/>
        <end position="235"/>
    </location>
    <ligand>
        <name>ATP</name>
        <dbReference type="ChEBI" id="CHEBI:30616"/>
    </ligand>
</feature>
<feature type="modified residue" description="Phosphoserine" evidence="15 17">
    <location>
        <position position="27"/>
    </location>
</feature>
<feature type="modified residue" description="Phosphoserine" evidence="14 15 16 17">
    <location>
        <position position="151"/>
    </location>
</feature>
<feature type="splice variant" id="VSP_047457" description="In isoform 4." evidence="13">
    <location>
        <begin position="1"/>
        <end position="53"/>
    </location>
</feature>
<feature type="splice variant" id="VSP_026715" description="In isoform 2." evidence="11">
    <original>TGKSYLLKRILGSLPPTGTVATASTGVAACHIGGT</original>
    <variation>SGGREEVGGQWWGGIEEQGDLSNFAPVQEQGSHIC</variation>
    <location>
        <begin position="232"/>
        <end position="266"/>
    </location>
</feature>
<feature type="splice variant" id="VSP_026716" description="In isoform 2." evidence="11">
    <location>
        <begin position="267"/>
        <end position="641"/>
    </location>
</feature>
<feature type="splice variant" id="VSP_026717" description="In isoform 3." evidence="12">
    <original>ESPDDDEAASDQENMDPIL</original>
    <variation>AAEGRGNEDRCSGSSIRALGGDWWGLRLGAASKQRTELRCVSTARPSLAQPRTNTLQSLTKEHKLQNVHPYFKLLFQGINSVWGH</variation>
    <location>
        <begin position="623"/>
        <end position="641"/>
    </location>
</feature>
<feature type="sequence variant" id="VAR_033206" description="In dbSNP:rs17802279.">
    <original>I</original>
    <variation>N</variation>
    <location>
        <position position="640"/>
    </location>
</feature>
<feature type="mutagenesis site" description="Loss of ATPase activity. Lower activity for single-stranded DNA." evidence="3">
    <original>K</original>
    <variation>A</variation>
    <location>
        <position position="234"/>
    </location>
</feature>
<feature type="helix" evidence="18">
    <location>
        <begin position="209"/>
        <end position="219"/>
    </location>
</feature>
<feature type="strand" evidence="18">
    <location>
        <begin position="224"/>
        <end position="229"/>
    </location>
</feature>
<feature type="helix" evidence="18">
    <location>
        <begin position="234"/>
        <end position="244"/>
    </location>
</feature>
<feature type="strand" evidence="18">
    <location>
        <begin position="250"/>
        <end position="256"/>
    </location>
</feature>
<feature type="helix" evidence="18">
    <location>
        <begin position="257"/>
        <end position="262"/>
    </location>
</feature>
<feature type="helix" evidence="18">
    <location>
        <begin position="268"/>
        <end position="272"/>
    </location>
</feature>
<feature type="helix" evidence="18">
    <location>
        <begin position="281"/>
        <end position="288"/>
    </location>
</feature>
<feature type="helix" evidence="18">
    <location>
        <begin position="293"/>
        <end position="299"/>
    </location>
</feature>
<feature type="strand" evidence="18">
    <location>
        <begin position="301"/>
        <end position="306"/>
    </location>
</feature>
<feature type="helix" evidence="18">
    <location>
        <begin position="308"/>
        <end position="310"/>
    </location>
</feature>
<feature type="helix" evidence="18">
    <location>
        <begin position="313"/>
        <end position="327"/>
    </location>
</feature>
<feature type="helix" evidence="18">
    <location>
        <begin position="332"/>
        <end position="335"/>
    </location>
</feature>
<feature type="strand" evidence="18">
    <location>
        <begin position="337"/>
        <end position="342"/>
    </location>
</feature>
<feature type="strand" evidence="18">
    <location>
        <begin position="352"/>
        <end position="355"/>
    </location>
</feature>
<feature type="helix" evidence="18">
    <location>
        <begin position="360"/>
        <end position="362"/>
    </location>
</feature>
<feature type="helix" evidence="18">
    <location>
        <begin position="366"/>
        <end position="369"/>
    </location>
</feature>
<feature type="strand" evidence="18">
    <location>
        <begin position="372"/>
        <end position="376"/>
    </location>
</feature>
<feature type="helix" evidence="18">
    <location>
        <begin position="385"/>
        <end position="395"/>
    </location>
</feature>
<feature type="helix" evidence="18">
    <location>
        <begin position="401"/>
        <end position="409"/>
    </location>
</feature>
<feature type="helix" evidence="18">
    <location>
        <begin position="410"/>
        <end position="412"/>
    </location>
</feature>
<feature type="strand" evidence="18">
    <location>
        <begin position="423"/>
        <end position="427"/>
    </location>
</feature>
<feature type="helix" evidence="18">
    <location>
        <begin position="429"/>
        <end position="442"/>
    </location>
</feature>
<feature type="strand" evidence="18">
    <location>
        <begin position="448"/>
        <end position="451"/>
    </location>
</feature>
<feature type="strand" evidence="18">
    <location>
        <begin position="453"/>
        <end position="456"/>
    </location>
</feature>
<feature type="helix" evidence="18">
    <location>
        <begin position="457"/>
        <end position="459"/>
    </location>
</feature>
<feature type="helix" evidence="18">
    <location>
        <begin position="460"/>
        <end position="466"/>
    </location>
</feature>
<feature type="strand" evidence="18">
    <location>
        <begin position="467"/>
        <end position="469"/>
    </location>
</feature>
<feature type="strand" evidence="18">
    <location>
        <begin position="471"/>
        <end position="475"/>
    </location>
</feature>
<feature type="strand" evidence="18">
    <location>
        <begin position="480"/>
        <end position="483"/>
    </location>
</feature>
<feature type="turn" evidence="18">
    <location>
        <begin position="489"/>
        <end position="492"/>
    </location>
</feature>
<feature type="strand" evidence="18">
    <location>
        <begin position="498"/>
        <end position="504"/>
    </location>
</feature>
<feature type="strand" evidence="18">
    <location>
        <begin position="512"/>
        <end position="516"/>
    </location>
</feature>
<feature type="strand" evidence="18">
    <location>
        <begin position="521"/>
        <end position="523"/>
    </location>
</feature>
<feature type="strand" evidence="18">
    <location>
        <begin position="527"/>
        <end position="532"/>
    </location>
</feature>
<feature type="helix" evidence="18">
    <location>
        <begin position="534"/>
        <end position="536"/>
    </location>
</feature>
<feature type="strand" evidence="18">
    <location>
        <begin position="538"/>
        <end position="543"/>
    </location>
</feature>
<feature type="strand" evidence="18">
    <location>
        <begin position="545"/>
        <end position="548"/>
    </location>
</feature>
<feature type="strand" evidence="18">
    <location>
        <begin position="550"/>
        <end position="553"/>
    </location>
</feature>
<feature type="helix" evidence="18">
    <location>
        <begin position="555"/>
        <end position="557"/>
    </location>
</feature>
<feature type="strand" evidence="18">
    <location>
        <begin position="562"/>
        <end position="568"/>
    </location>
</feature>
<feature type="helix" evidence="18">
    <location>
        <begin position="577"/>
        <end position="583"/>
    </location>
</feature>
<feature type="strand" evidence="18">
    <location>
        <begin position="585"/>
        <end position="587"/>
    </location>
</feature>
<feature type="helix" evidence="18">
    <location>
        <begin position="588"/>
        <end position="590"/>
    </location>
</feature>
<feature type="strand" evidence="18">
    <location>
        <begin position="591"/>
        <end position="595"/>
    </location>
</feature>
<feature type="helix" evidence="18">
    <location>
        <begin position="598"/>
        <end position="600"/>
    </location>
</feature>
<feature type="helix" evidence="18">
    <location>
        <begin position="605"/>
        <end position="614"/>
    </location>
</feature>
<feature type="turn" evidence="18">
    <location>
        <begin position="615"/>
        <end position="617"/>
    </location>
</feature>
<keyword id="KW-0002">3D-structure</keyword>
<keyword id="KW-0024">Alternative initiation</keyword>
<keyword id="KW-0025">Alternative splicing</keyword>
<keyword id="KW-0067">ATP-binding</keyword>
<keyword id="KW-0227">DNA damage</keyword>
<keyword id="KW-0233">DNA recombination</keyword>
<keyword id="KW-0234">DNA repair</keyword>
<keyword id="KW-0238">DNA-binding</keyword>
<keyword id="KW-0347">Helicase</keyword>
<keyword id="KW-0378">Hydrolase</keyword>
<keyword id="KW-0413">Isomerase</keyword>
<keyword id="KW-0496">Mitochondrion</keyword>
<keyword id="KW-0547">Nucleotide-binding</keyword>
<keyword id="KW-0539">Nucleus</keyword>
<keyword id="KW-0597">Phosphoprotein</keyword>
<keyword id="KW-1267">Proteomics identification</keyword>
<keyword id="KW-1185">Reference proteome</keyword>
<accession>Q9H611</accession>
<accession>B2RPL7</accession>
<accession>Q1W5B6</accession>
<accession>Q330H5</accession>
<accession>Q33E24</accession>
<gene>
    <name evidence="1" type="primary">PIF1</name>
    <name type="synonym">C15orf20</name>
</gene>
<reference key="1">
    <citation type="journal article" date="2006" name="Nucleic Acids Res.">
        <title>The human Pif1 helicase, a potential Escherichia coli RecD homologue, inhibits telomerase activity.</title>
        <authorList>
            <person name="Zhang D.-H."/>
            <person name="Zhou B."/>
            <person name="Huang Y."/>
            <person name="Xu L.-X."/>
            <person name="Zhou J.-Q."/>
        </authorList>
    </citation>
    <scope>NUCLEOTIDE SEQUENCE [MRNA] (ISOFORM 1)</scope>
    <scope>FUNCTION AS A HELICASE</scope>
    <scope>FUNCTION AS AN ATPASE</scope>
    <scope>CATALYTIC ACTIVITY</scope>
    <scope>REGION</scope>
    <scope>MUTAGENESIS OF LYS-234</scope>
    <scope>SUBCELLULAR LOCATION</scope>
    <scope>COFACTOR</scope>
</reference>
<reference key="2">
    <citation type="journal article" date="2008" name="Nucleic Acids Res.">
        <title>Biochemical analysis of human PIF1 helicase and functions of its N-terminal domain.</title>
        <authorList>
            <person name="Gu Y."/>
            <person name="Masuda Y."/>
            <person name="Kamiya K."/>
        </authorList>
    </citation>
    <scope>NUCLEOTIDE SEQUENCE [MRNA] (ISOFORM 1)</scope>
    <scope>FUNCTION</scope>
    <scope>CATALYTIC ACTIVITY</scope>
    <scope>SUBUNIT</scope>
    <scope>BIOPHYSICOCHEMICAL PROPERTIES</scope>
    <scope>PINT DOMAIN</scope>
</reference>
<reference key="3">
    <citation type="submission" date="2003-12" db="EMBL/GenBank/DDBJ databases">
        <authorList>
            <person name="Snow B.E."/>
            <person name="Erdmann N."/>
            <person name="Harrington L."/>
        </authorList>
    </citation>
    <scope>NUCLEOTIDE SEQUENCE [MRNA] (ISOFORM 1)</scope>
</reference>
<reference key="4">
    <citation type="submission" date="2004-07" db="EMBL/GenBank/DDBJ databases">
        <title>Human PIF1 DNA helicase.</title>
        <authorList>
            <person name="Futami K."/>
            <person name="Furuichi Y."/>
            <person name="Shimamoto A."/>
        </authorList>
    </citation>
    <scope>NUCLEOTIDE SEQUENCE [MRNA] (ISOFORMS 1 AND 3)</scope>
</reference>
<reference key="5">
    <citation type="journal article" date="2004" name="Nat. Genet.">
        <title>Complete sequencing and characterization of 21,243 full-length human cDNAs.</title>
        <authorList>
            <person name="Ota T."/>
            <person name="Suzuki Y."/>
            <person name="Nishikawa T."/>
            <person name="Otsuki T."/>
            <person name="Sugiyama T."/>
            <person name="Irie R."/>
            <person name="Wakamatsu A."/>
            <person name="Hayashi K."/>
            <person name="Sato H."/>
            <person name="Nagai K."/>
            <person name="Kimura K."/>
            <person name="Makita H."/>
            <person name="Sekine M."/>
            <person name="Obayashi M."/>
            <person name="Nishi T."/>
            <person name="Shibahara T."/>
            <person name="Tanaka T."/>
            <person name="Ishii S."/>
            <person name="Yamamoto J."/>
            <person name="Saito K."/>
            <person name="Kawai Y."/>
            <person name="Isono Y."/>
            <person name="Nakamura Y."/>
            <person name="Nagahari K."/>
            <person name="Murakami K."/>
            <person name="Yasuda T."/>
            <person name="Iwayanagi T."/>
            <person name="Wagatsuma M."/>
            <person name="Shiratori A."/>
            <person name="Sudo H."/>
            <person name="Hosoiri T."/>
            <person name="Kaku Y."/>
            <person name="Kodaira H."/>
            <person name="Kondo H."/>
            <person name="Sugawara M."/>
            <person name="Takahashi M."/>
            <person name="Kanda K."/>
            <person name="Yokoi T."/>
            <person name="Furuya T."/>
            <person name="Kikkawa E."/>
            <person name="Omura Y."/>
            <person name="Abe K."/>
            <person name="Kamihara K."/>
            <person name="Katsuta N."/>
            <person name="Sato K."/>
            <person name="Tanikawa M."/>
            <person name="Yamazaki M."/>
            <person name="Ninomiya K."/>
            <person name="Ishibashi T."/>
            <person name="Yamashita H."/>
            <person name="Murakawa K."/>
            <person name="Fujimori K."/>
            <person name="Tanai H."/>
            <person name="Kimata M."/>
            <person name="Watanabe M."/>
            <person name="Hiraoka S."/>
            <person name="Chiba Y."/>
            <person name="Ishida S."/>
            <person name="Ono Y."/>
            <person name="Takiguchi S."/>
            <person name="Watanabe S."/>
            <person name="Yosida M."/>
            <person name="Hotuta T."/>
            <person name="Kusano J."/>
            <person name="Kanehori K."/>
            <person name="Takahashi-Fujii A."/>
            <person name="Hara H."/>
            <person name="Tanase T.-O."/>
            <person name="Nomura Y."/>
            <person name="Togiya S."/>
            <person name="Komai F."/>
            <person name="Hara R."/>
            <person name="Takeuchi K."/>
            <person name="Arita M."/>
            <person name="Imose N."/>
            <person name="Musashino K."/>
            <person name="Yuuki H."/>
            <person name="Oshima A."/>
            <person name="Sasaki N."/>
            <person name="Aotsuka S."/>
            <person name="Yoshikawa Y."/>
            <person name="Matsunawa H."/>
            <person name="Ichihara T."/>
            <person name="Shiohata N."/>
            <person name="Sano S."/>
            <person name="Moriya S."/>
            <person name="Momiyama H."/>
            <person name="Satoh N."/>
            <person name="Takami S."/>
            <person name="Terashima Y."/>
            <person name="Suzuki O."/>
            <person name="Nakagawa S."/>
            <person name="Senoh A."/>
            <person name="Mizoguchi H."/>
            <person name="Goto Y."/>
            <person name="Shimizu F."/>
            <person name="Wakebe H."/>
            <person name="Hishigaki H."/>
            <person name="Watanabe T."/>
            <person name="Sugiyama A."/>
            <person name="Takemoto M."/>
            <person name="Kawakami B."/>
            <person name="Yamazaki M."/>
            <person name="Watanabe K."/>
            <person name="Kumagai A."/>
            <person name="Itakura S."/>
            <person name="Fukuzumi Y."/>
            <person name="Fujimori Y."/>
            <person name="Komiyama M."/>
            <person name="Tashiro H."/>
            <person name="Tanigami A."/>
            <person name="Fujiwara T."/>
            <person name="Ono T."/>
            <person name="Yamada K."/>
            <person name="Fujii Y."/>
            <person name="Ozaki K."/>
            <person name="Hirao M."/>
            <person name="Ohmori Y."/>
            <person name="Kawabata A."/>
            <person name="Hikiji T."/>
            <person name="Kobatake N."/>
            <person name="Inagaki H."/>
            <person name="Ikema Y."/>
            <person name="Okamoto S."/>
            <person name="Okitani R."/>
            <person name="Kawakami T."/>
            <person name="Noguchi S."/>
            <person name="Itoh T."/>
            <person name="Shigeta K."/>
            <person name="Senba T."/>
            <person name="Matsumura K."/>
            <person name="Nakajima Y."/>
            <person name="Mizuno T."/>
            <person name="Morinaga M."/>
            <person name="Sasaki M."/>
            <person name="Togashi T."/>
            <person name="Oyama M."/>
            <person name="Hata H."/>
            <person name="Watanabe M."/>
            <person name="Komatsu T."/>
            <person name="Mizushima-Sugano J."/>
            <person name="Satoh T."/>
            <person name="Shirai Y."/>
            <person name="Takahashi Y."/>
            <person name="Nakagawa K."/>
            <person name="Okumura K."/>
            <person name="Nagase T."/>
            <person name="Nomura N."/>
            <person name="Kikuchi H."/>
            <person name="Masuho Y."/>
            <person name="Yamashita R."/>
            <person name="Nakai K."/>
            <person name="Yada T."/>
            <person name="Nakamura Y."/>
            <person name="Ohara O."/>
            <person name="Isogai T."/>
            <person name="Sugano S."/>
        </authorList>
    </citation>
    <scope>NUCLEOTIDE SEQUENCE [LARGE SCALE MRNA] (ISOFORM 2)</scope>
    <source>
        <tissue>Small intestine</tissue>
    </source>
</reference>
<reference key="6">
    <citation type="journal article" date="2004" name="Genome Res.">
        <title>The status, quality, and expansion of the NIH full-length cDNA project: the Mammalian Gene Collection (MGC).</title>
        <authorList>
            <consortium name="The MGC Project Team"/>
        </authorList>
    </citation>
    <scope>NUCLEOTIDE SEQUENCE [LARGE SCALE MRNA]</scope>
    <source>
        <tissue>Brain</tissue>
        <tissue>Testis</tissue>
    </source>
</reference>
<reference key="7">
    <citation type="journal article" date="2006" name="Cell Cycle">
        <title>Human PIF helicase is cell cycle regulated and associates with telomerase.</title>
        <authorList>
            <person name="Mateyak M.K."/>
            <person name="Zakian V.A."/>
        </authorList>
    </citation>
    <scope>FUNCTION</scope>
    <scope>SUBCELLULAR LOCATION</scope>
    <scope>INTERACTION WITH TELOMERASE</scope>
    <scope>INDUCTION</scope>
</reference>
<reference key="8">
    <citation type="journal article" date="2007" name="Biol. Pharm. Bull.">
        <title>Mitochondrial and nuclear localization of human Pif1 helicase.</title>
        <authorList>
            <person name="Futami K."/>
            <person name="Shimamoto A."/>
            <person name="Furuichi Y."/>
        </authorList>
    </citation>
    <scope>FUNCTION</scope>
    <scope>SUBCELLULAR LOCATION</scope>
    <scope>CATALYTIC ACTIVITY</scope>
</reference>
<reference key="9">
    <citation type="journal article" date="2008" name="Proc. Natl. Acad. Sci. U.S.A.">
        <title>A quantitative atlas of mitotic phosphorylation.</title>
        <authorList>
            <person name="Dephoure N."/>
            <person name="Zhou C."/>
            <person name="Villen J."/>
            <person name="Beausoleil S.A."/>
            <person name="Bakalarski C.E."/>
            <person name="Elledge S.J."/>
            <person name="Gygi S.P."/>
        </authorList>
    </citation>
    <scope>PHOSPHORYLATION [LARGE SCALE ANALYSIS] AT SER-151</scope>
    <scope>IDENTIFICATION BY MASS SPECTROMETRY [LARGE SCALE ANALYSIS]</scope>
    <source>
        <tissue>Cervix carcinoma</tissue>
    </source>
</reference>
<reference key="10">
    <citation type="journal article" date="2009" name="Nucleic Acids Res.">
        <title>Human Pif1 helicase unwinds synthetic DNA structures resembling stalled DNA replication forks.</title>
        <authorList>
            <person name="George T."/>
            <person name="Wen Q."/>
            <person name="Griffiths R."/>
            <person name="Ganesh A."/>
            <person name="Meuth M."/>
            <person name="Sanders C.M."/>
        </authorList>
    </citation>
    <scope>FUNCTION</scope>
    <scope>CATALYTIC ACTIVITY</scope>
    <scope>DNA-BINDING</scope>
</reference>
<reference key="11">
    <citation type="journal article" date="2010" name="Biochem. J.">
        <title>Human Pif1 helicase is a G-quadruplex DNA-binding protein with G-quadruplex DNA-unwinding activity.</title>
        <authorList>
            <person name="Sanders C.M."/>
        </authorList>
    </citation>
    <scope>FUNCTION IN G4-UNWINDING</scope>
    <scope>CATALYTIC ACTIVITY</scope>
</reference>
<reference key="12">
    <citation type="journal article" date="2010" name="Sci. Signal.">
        <title>Quantitative phosphoproteomics reveals widespread full phosphorylation site occupancy during mitosis.</title>
        <authorList>
            <person name="Olsen J.V."/>
            <person name="Vermeulen M."/>
            <person name="Santamaria A."/>
            <person name="Kumar C."/>
            <person name="Miller M.L."/>
            <person name="Jensen L.J."/>
            <person name="Gnad F."/>
            <person name="Cox J."/>
            <person name="Jensen T.S."/>
            <person name="Nigg E.A."/>
            <person name="Brunak S."/>
            <person name="Mann M."/>
        </authorList>
    </citation>
    <scope>PHOSPHORYLATION [LARGE SCALE ANALYSIS] AT SER-27 AND SER-151</scope>
    <scope>IDENTIFICATION BY MASS SPECTROMETRY [LARGE SCALE ANALYSIS]</scope>
    <source>
        <tissue>Cervix carcinoma</tissue>
    </source>
</reference>
<reference key="13">
    <citation type="journal article" date="2011" name="Sci. Signal.">
        <title>System-wide temporal characterization of the proteome and phosphoproteome of human embryonic stem cell differentiation.</title>
        <authorList>
            <person name="Rigbolt K.T."/>
            <person name="Prokhorova T.A."/>
            <person name="Akimov V."/>
            <person name="Henningsen J."/>
            <person name="Johansen P.T."/>
            <person name="Kratchmarova I."/>
            <person name="Kassem M."/>
            <person name="Mann M."/>
            <person name="Olsen J.V."/>
            <person name="Blagoev B."/>
        </authorList>
    </citation>
    <scope>PHOSPHORYLATION [LARGE SCALE ANALYSIS] AT SER-151</scope>
    <scope>IDENTIFICATION BY MASS SPECTROMETRY [LARGE SCALE ANALYSIS]</scope>
</reference>
<reference key="14">
    <citation type="journal article" date="2013" name="J. Proteome Res.">
        <title>Toward a comprehensive characterization of a human cancer cell phosphoproteome.</title>
        <authorList>
            <person name="Zhou H."/>
            <person name="Di Palma S."/>
            <person name="Preisinger C."/>
            <person name="Peng M."/>
            <person name="Polat A.N."/>
            <person name="Heck A.J."/>
            <person name="Mohammed S."/>
        </authorList>
    </citation>
    <scope>PHOSPHORYLATION [LARGE SCALE ANALYSIS] AT SER-27 AND SER-151</scope>
    <scope>IDENTIFICATION BY MASS SPECTROMETRY [LARGE SCALE ANALYSIS]</scope>
    <source>
        <tissue>Cervix carcinoma</tissue>
        <tissue>Erythroleukemia</tissue>
    </source>
</reference>
<reference key="15">
    <citation type="journal article" date="2013" name="Nature">
        <title>Pif1 family helicases suppress genome instability at G-quadruplex motifs.</title>
        <authorList>
            <person name="Paeschke K."/>
            <person name="Bochman M.L."/>
            <person name="Garcia P.D."/>
            <person name="Cejka P."/>
            <person name="Friedman K.L."/>
            <person name="Kowalczykowski S.C."/>
            <person name="Zakian V.A."/>
        </authorList>
    </citation>
    <scope>FUNCTION IN G4-UNWINDING AND TELOMERE LENGTH REGULATION</scope>
</reference>
<reference key="16">
    <citation type="journal article" date="2013" name="Nucleic Acids Res.">
        <title>Alternative translation initiation augments the human mitochondrial proteome.</title>
        <authorList>
            <person name="Kazak L."/>
            <person name="Reyes A."/>
            <person name="Duncan A.L."/>
            <person name="Rorbach J."/>
            <person name="Wood S.R."/>
            <person name="Brea-Calvo G."/>
            <person name="Gammage P.A."/>
            <person name="Robinson A.J."/>
            <person name="Minczuk M."/>
            <person name="Holt I.J."/>
        </authorList>
    </citation>
    <scope>ALTERNATIVE INITIATION (ISOFORM 4)</scope>
    <scope>SUBCELLULAR LOCATION (ISOFORM 4)</scope>
</reference>
<sequence>MLSGIEAAAGEYEDSELRCRVAVEELSPGGQPRRRQALRTAELSLGRNERRELMLRLQAPGPAGRPRCFPLRAARLFTRFAEAGRSTLRLPAHDTPGAGAVQLLLSDCPPDRLRRFLRTLRLKLAAAPGPGPASARAQLLGPRPRDFVTISPVQPEERRLRAATRVPDTTLVKRPVEPQAGAEPSTEAPRWPLPVKRLSLPSTKPQLSEEQAAVLRAVLKGQSIFFTGSAGTGKSYLLKRILGSLPPTGTVATASTGVAACHIGGTTLHAFAGIGSGQAPLAQCVALAQRPGVRQGWLNCQRLVIDEISMVEADLFDKLEAVARAVRQQNKPFGGIQLIICGDFLQLPPVTKGSQPPRFCFQSKSWKRCVPVTLELTKVWRQADQTFISLLQAVRLGRCSDEVTRQLQATASHKVGRDGIVATRLCTHQDDVALTNERRLQELPGKVHRFEAMDSNPELASTLDAQCPVSQLLQLKLGAQVMLVKNLSVSRGLVNGARGVVVGFEAEGRGLPQVRFLCGVTEVIHADRWTVQATGGQLLSRQQLPLQLAWAMSIHKSQGMTLDCVEISLGRVFASGQAYVALSRARSLQGLRVLDFDPMAVRCDPRVLHFYATLRRGRSLSLESPDDDEAASDQENMDPIL</sequence>
<evidence type="ECO:0000255" key="1">
    <source>
        <dbReference type="HAMAP-Rule" id="MF_03176"/>
    </source>
</evidence>
<evidence type="ECO:0000256" key="2">
    <source>
        <dbReference type="SAM" id="MobiDB-lite"/>
    </source>
</evidence>
<evidence type="ECO:0000269" key="3">
    <source>
    </source>
</evidence>
<evidence type="ECO:0000269" key="4">
    <source>
    </source>
</evidence>
<evidence type="ECO:0000269" key="5">
    <source>
    </source>
</evidence>
<evidence type="ECO:0000269" key="6">
    <source>
    </source>
</evidence>
<evidence type="ECO:0000269" key="7">
    <source>
    </source>
</evidence>
<evidence type="ECO:0000269" key="8">
    <source>
    </source>
</evidence>
<evidence type="ECO:0000269" key="9">
    <source>
    </source>
</evidence>
<evidence type="ECO:0000269" key="10">
    <source>
    </source>
</evidence>
<evidence type="ECO:0000303" key="11">
    <source>
    </source>
</evidence>
<evidence type="ECO:0000303" key="12">
    <source ref="4"/>
</evidence>
<evidence type="ECO:0000305" key="13"/>
<evidence type="ECO:0007744" key="14">
    <source>
    </source>
</evidence>
<evidence type="ECO:0007744" key="15">
    <source>
    </source>
</evidence>
<evidence type="ECO:0007744" key="16">
    <source>
    </source>
</evidence>
<evidence type="ECO:0007744" key="17">
    <source>
    </source>
</evidence>
<evidence type="ECO:0007829" key="18">
    <source>
        <dbReference type="PDB" id="6HPH"/>
    </source>
</evidence>
<name>PIF1_HUMAN</name>